<evidence type="ECO:0000255" key="1">
    <source>
        <dbReference type="HAMAP-Rule" id="MF_01151"/>
    </source>
</evidence>
<evidence type="ECO:0000256" key="2">
    <source>
        <dbReference type="SAM" id="MobiDB-lite"/>
    </source>
</evidence>
<reference key="1">
    <citation type="submission" date="2008-10" db="EMBL/GenBank/DDBJ databases">
        <title>Genome sequence of Bacillus cereus AH187.</title>
        <authorList>
            <person name="Dodson R.J."/>
            <person name="Durkin A.S."/>
            <person name="Rosovitz M.J."/>
            <person name="Rasko D.A."/>
            <person name="Kolsto A.B."/>
            <person name="Okstad O.A."/>
            <person name="Ravel J."/>
            <person name="Sutton G."/>
        </authorList>
    </citation>
    <scope>NUCLEOTIDE SEQUENCE [LARGE SCALE GENOMIC DNA]</scope>
    <source>
        <strain>AH187</strain>
    </source>
</reference>
<organism>
    <name type="scientific">Bacillus cereus (strain AH187)</name>
    <dbReference type="NCBI Taxonomy" id="405534"/>
    <lineage>
        <taxon>Bacteria</taxon>
        <taxon>Bacillati</taxon>
        <taxon>Bacillota</taxon>
        <taxon>Bacilli</taxon>
        <taxon>Bacillales</taxon>
        <taxon>Bacillaceae</taxon>
        <taxon>Bacillus</taxon>
        <taxon>Bacillus cereus group</taxon>
    </lineage>
</organism>
<sequence length="192" mass="22206">MEERNEQVVEEVKEEVKEAQVEEAVTSEDSEETVEEKSEAALLQEKVDELQAKLTETEGRMLRLQADFENYKRRVQMDKQAAEKYRAQSLVSDILPALDNFERAMQVEATDEQMKSLLQGMEMVYRQLLEAMTKEGVEAIEAVGKQFDPHEHQAVMQVEDSEFESNAVVEEFQKGYKLKDRVIRPSMVKVNQ</sequence>
<comment type="function">
    <text evidence="1">Participates actively in the response to hyperosmotic and heat shock by preventing the aggregation of stress-denatured proteins, in association with DnaK and GrpE. It is the nucleotide exchange factor for DnaK and may function as a thermosensor. Unfolded proteins bind initially to DnaJ; upon interaction with the DnaJ-bound protein, DnaK hydrolyzes its bound ATP, resulting in the formation of a stable complex. GrpE releases ADP from DnaK; ATP binding to DnaK triggers the release of the substrate protein, thus completing the reaction cycle. Several rounds of ATP-dependent interactions between DnaJ, DnaK and GrpE are required for fully efficient folding.</text>
</comment>
<comment type="subunit">
    <text evidence="1">Homodimer.</text>
</comment>
<comment type="subcellular location">
    <subcellularLocation>
        <location evidence="1">Cytoplasm</location>
    </subcellularLocation>
</comment>
<comment type="similarity">
    <text evidence="1">Belongs to the GrpE family.</text>
</comment>
<gene>
    <name evidence="1" type="primary">grpE</name>
    <name type="ordered locus">BCAH187_A4448</name>
</gene>
<protein>
    <recommendedName>
        <fullName evidence="1">Protein GrpE</fullName>
    </recommendedName>
    <alternativeName>
        <fullName evidence="1">HSP-70 cofactor</fullName>
    </alternativeName>
</protein>
<dbReference type="EMBL" id="CP001177">
    <property type="protein sequence ID" value="ACJ78323.1"/>
    <property type="molecule type" value="Genomic_DNA"/>
</dbReference>
<dbReference type="SMR" id="B7HPL4"/>
<dbReference type="KEGG" id="bcr:BCAH187_A4448"/>
<dbReference type="HOGENOM" id="CLU_057217_5_2_9"/>
<dbReference type="Proteomes" id="UP000002214">
    <property type="component" value="Chromosome"/>
</dbReference>
<dbReference type="GO" id="GO:0005737">
    <property type="term" value="C:cytoplasm"/>
    <property type="evidence" value="ECO:0007669"/>
    <property type="project" value="UniProtKB-SubCell"/>
</dbReference>
<dbReference type="GO" id="GO:0000774">
    <property type="term" value="F:adenyl-nucleotide exchange factor activity"/>
    <property type="evidence" value="ECO:0007669"/>
    <property type="project" value="InterPro"/>
</dbReference>
<dbReference type="GO" id="GO:0042803">
    <property type="term" value="F:protein homodimerization activity"/>
    <property type="evidence" value="ECO:0007669"/>
    <property type="project" value="InterPro"/>
</dbReference>
<dbReference type="GO" id="GO:0051087">
    <property type="term" value="F:protein-folding chaperone binding"/>
    <property type="evidence" value="ECO:0007669"/>
    <property type="project" value="InterPro"/>
</dbReference>
<dbReference type="GO" id="GO:0051082">
    <property type="term" value="F:unfolded protein binding"/>
    <property type="evidence" value="ECO:0007669"/>
    <property type="project" value="TreeGrafter"/>
</dbReference>
<dbReference type="GO" id="GO:0006457">
    <property type="term" value="P:protein folding"/>
    <property type="evidence" value="ECO:0007669"/>
    <property type="project" value="InterPro"/>
</dbReference>
<dbReference type="CDD" id="cd00446">
    <property type="entry name" value="GrpE"/>
    <property type="match status" value="1"/>
</dbReference>
<dbReference type="FunFam" id="2.30.22.10:FF:000001">
    <property type="entry name" value="Protein GrpE"/>
    <property type="match status" value="1"/>
</dbReference>
<dbReference type="FunFam" id="3.90.20.20:FF:000002">
    <property type="entry name" value="Protein GrpE"/>
    <property type="match status" value="1"/>
</dbReference>
<dbReference type="Gene3D" id="3.90.20.20">
    <property type="match status" value="1"/>
</dbReference>
<dbReference type="Gene3D" id="2.30.22.10">
    <property type="entry name" value="Head domain of nucleotide exchange factor GrpE"/>
    <property type="match status" value="1"/>
</dbReference>
<dbReference type="HAMAP" id="MF_01151">
    <property type="entry name" value="GrpE"/>
    <property type="match status" value="1"/>
</dbReference>
<dbReference type="InterPro" id="IPR000740">
    <property type="entry name" value="GrpE"/>
</dbReference>
<dbReference type="InterPro" id="IPR013805">
    <property type="entry name" value="GrpE_coiled_coil"/>
</dbReference>
<dbReference type="InterPro" id="IPR009012">
    <property type="entry name" value="GrpE_head"/>
</dbReference>
<dbReference type="NCBIfam" id="NF010738">
    <property type="entry name" value="PRK14140.1"/>
    <property type="match status" value="1"/>
</dbReference>
<dbReference type="PANTHER" id="PTHR21237">
    <property type="entry name" value="GRPE PROTEIN"/>
    <property type="match status" value="1"/>
</dbReference>
<dbReference type="PANTHER" id="PTHR21237:SF23">
    <property type="entry name" value="GRPE PROTEIN HOMOLOG, MITOCHONDRIAL"/>
    <property type="match status" value="1"/>
</dbReference>
<dbReference type="Pfam" id="PF01025">
    <property type="entry name" value="GrpE"/>
    <property type="match status" value="1"/>
</dbReference>
<dbReference type="PRINTS" id="PR00773">
    <property type="entry name" value="GRPEPROTEIN"/>
</dbReference>
<dbReference type="SUPFAM" id="SSF58014">
    <property type="entry name" value="Coiled-coil domain of nucleotide exchange factor GrpE"/>
    <property type="match status" value="1"/>
</dbReference>
<dbReference type="SUPFAM" id="SSF51064">
    <property type="entry name" value="Head domain of nucleotide exchange factor GrpE"/>
    <property type="match status" value="1"/>
</dbReference>
<dbReference type="PROSITE" id="PS01071">
    <property type="entry name" value="GRPE"/>
    <property type="match status" value="1"/>
</dbReference>
<keyword id="KW-0143">Chaperone</keyword>
<keyword id="KW-0963">Cytoplasm</keyword>
<keyword id="KW-0346">Stress response</keyword>
<name>GRPE_BACC7</name>
<feature type="chain" id="PRO_1000137541" description="Protein GrpE">
    <location>
        <begin position="1"/>
        <end position="192"/>
    </location>
</feature>
<feature type="region of interest" description="Disordered" evidence="2">
    <location>
        <begin position="1"/>
        <end position="34"/>
    </location>
</feature>
<feature type="compositionally biased region" description="Basic and acidic residues" evidence="2">
    <location>
        <begin position="1"/>
        <end position="20"/>
    </location>
</feature>
<feature type="compositionally biased region" description="Acidic residues" evidence="2">
    <location>
        <begin position="25"/>
        <end position="34"/>
    </location>
</feature>
<accession>B7HPL4</accession>
<proteinExistence type="inferred from homology"/>